<gene>
    <name evidence="4 8" type="primary">rhoaa</name>
</gene>
<protein>
    <recommendedName>
        <fullName evidence="5">Rho-related GTP-binding protein RhoA-A</fullName>
    </recommendedName>
</protein>
<comment type="function">
    <text evidence="2">Regulates a signal transduction pathway linking plasma membrane receptors to the assembly of focal adhesions and actin stress fibers.</text>
</comment>
<comment type="subcellular location">
    <subcellularLocation>
        <location evidence="6">Cell membrane</location>
        <topology evidence="2">Lipid-anchor</topology>
        <orientation evidence="2">Cytoplasmic side</orientation>
    </subcellularLocation>
</comment>
<comment type="PTM">
    <text evidence="6">(Microbial infection) Glycosylated at Tyr-34 by Yersinia ruckeri toxin Afp18. Mono-O-GlcNAcylation by Afp18 inhibits RhoA activation by guanine nucleotide exchange factors and blocks RhoA signaling.</text>
</comment>
<comment type="similarity">
    <text evidence="5">Belongs to the small GTPase superfamily. Rho family.</text>
</comment>
<feature type="chain" id="PRO_0000434735" description="Rho-related GTP-binding protein RhoA-A">
    <location>
        <begin position="1"/>
        <end position="190"/>
    </location>
</feature>
<feature type="propeptide" id="PRO_0000434736" description="Removed in mature form" evidence="1">
    <location>
        <begin position="191"/>
        <end position="193"/>
    </location>
</feature>
<feature type="binding site" evidence="2">
    <location>
        <begin position="12"/>
        <end position="19"/>
    </location>
    <ligand>
        <name>GTP</name>
        <dbReference type="ChEBI" id="CHEBI:37565"/>
    </ligand>
</feature>
<feature type="binding site" evidence="3">
    <location>
        <begin position="30"/>
        <end position="37"/>
    </location>
    <ligand>
        <name>GTP</name>
        <dbReference type="ChEBI" id="CHEBI:37565"/>
    </ligand>
</feature>
<feature type="binding site" evidence="3">
    <location>
        <begin position="59"/>
        <end position="63"/>
    </location>
    <ligand>
        <name>GTP</name>
        <dbReference type="ChEBI" id="CHEBI:37565"/>
    </ligand>
</feature>
<feature type="binding site" evidence="2">
    <location>
        <begin position="117"/>
        <end position="120"/>
    </location>
    <ligand>
        <name>GTP</name>
        <dbReference type="ChEBI" id="CHEBI:37565"/>
    </ligand>
</feature>
<feature type="binding site" evidence="3">
    <location>
        <begin position="160"/>
        <end position="162"/>
    </location>
    <ligand>
        <name>GTP</name>
        <dbReference type="ChEBI" id="CHEBI:37565"/>
    </ligand>
</feature>
<feature type="modified residue" description="Cysteine methyl ester" evidence="1">
    <location>
        <position position="190"/>
    </location>
</feature>
<feature type="lipid moiety-binding region" description="S-geranylgeranyl cysteine" evidence="1">
    <location>
        <position position="190"/>
    </location>
</feature>
<feature type="glycosylation site" description="(Microbial infection) O-linked (GlcNAc) tyrosine; by Yersinia Afp18" evidence="6">
    <location>
        <position position="34"/>
    </location>
</feature>
<keyword id="KW-1003">Cell membrane</keyword>
<keyword id="KW-0325">Glycoprotein</keyword>
<keyword id="KW-0342">GTP-binding</keyword>
<keyword id="KW-0449">Lipoprotein</keyword>
<keyword id="KW-0472">Membrane</keyword>
<keyword id="KW-0488">Methylation</keyword>
<keyword id="KW-0547">Nucleotide-binding</keyword>
<keyword id="KW-0636">Prenylation</keyword>
<keyword id="KW-1185">Reference proteome</keyword>
<accession>Q6NUX8</accession>
<dbReference type="EMBL" id="AY865555">
    <property type="protein sequence ID" value="AAX20127.1"/>
    <property type="molecule type" value="mRNA"/>
</dbReference>
<dbReference type="EMBL" id="BX004884">
    <property type="status" value="NOT_ANNOTATED_CDS"/>
    <property type="molecule type" value="Genomic_DNA"/>
</dbReference>
<dbReference type="EMBL" id="BC056556">
    <property type="protein sequence ID" value="AAH56556.1"/>
    <property type="molecule type" value="mRNA"/>
</dbReference>
<dbReference type="EMBL" id="BC068390">
    <property type="protein sequence ID" value="AAH68390.1"/>
    <property type="molecule type" value="mRNA"/>
</dbReference>
<dbReference type="RefSeq" id="NP_998302.1">
    <property type="nucleotide sequence ID" value="NM_213137.1"/>
</dbReference>
<dbReference type="SMR" id="Q6NUX8"/>
<dbReference type="FunCoup" id="Q6NUX8">
    <property type="interactions" value="3099"/>
</dbReference>
<dbReference type="STRING" id="7955.ENSDARP00000040644"/>
<dbReference type="GlyCosmos" id="Q6NUX8">
    <property type="glycosylation" value="1 site, No reported glycans"/>
</dbReference>
<dbReference type="PaxDb" id="7955-ENSDARP00000040644"/>
<dbReference type="Ensembl" id="ENSDART00000040645">
    <property type="protein sequence ID" value="ENSDARP00000040644"/>
    <property type="gene ID" value="ENSDARG00000026845"/>
</dbReference>
<dbReference type="Ensembl" id="ENSDART00000177931">
    <property type="protein sequence ID" value="ENSDARP00000144555"/>
    <property type="gene ID" value="ENSDARG00000026845"/>
</dbReference>
<dbReference type="GeneID" id="406411"/>
<dbReference type="KEGG" id="dre:406411"/>
<dbReference type="AGR" id="ZFIN:ZDB-GENE-040426-2150"/>
<dbReference type="CTD" id="406411"/>
<dbReference type="ZFIN" id="ZDB-GENE-040426-2150">
    <property type="gene designation" value="rhoaa"/>
</dbReference>
<dbReference type="eggNOG" id="KOG0393">
    <property type="taxonomic scope" value="Eukaryota"/>
</dbReference>
<dbReference type="HOGENOM" id="CLU_041217_21_2_1"/>
<dbReference type="InParanoid" id="Q6NUX8"/>
<dbReference type="OMA" id="QFPEFYV"/>
<dbReference type="OrthoDB" id="8830751at2759"/>
<dbReference type="PhylomeDB" id="Q6NUX8"/>
<dbReference type="TreeFam" id="TF300837"/>
<dbReference type="PRO" id="PR:Q6NUX8"/>
<dbReference type="Proteomes" id="UP000000437">
    <property type="component" value="Chromosome 8"/>
</dbReference>
<dbReference type="Bgee" id="ENSDARG00000026845">
    <property type="expression patterns" value="Expressed in swim bladder and 26 other cell types or tissues"/>
</dbReference>
<dbReference type="ExpressionAtlas" id="Q6NUX8">
    <property type="expression patterns" value="baseline and differential"/>
</dbReference>
<dbReference type="GO" id="GO:0005886">
    <property type="term" value="C:plasma membrane"/>
    <property type="evidence" value="ECO:0000318"/>
    <property type="project" value="GO_Central"/>
</dbReference>
<dbReference type="GO" id="GO:0005525">
    <property type="term" value="F:GTP binding"/>
    <property type="evidence" value="ECO:0000318"/>
    <property type="project" value="GO_Central"/>
</dbReference>
<dbReference type="GO" id="GO:0003924">
    <property type="term" value="F:GTPase activity"/>
    <property type="evidence" value="ECO:0000318"/>
    <property type="project" value="GO_Central"/>
</dbReference>
<dbReference type="GO" id="GO:0007015">
    <property type="term" value="P:actin filament organization"/>
    <property type="evidence" value="ECO:0000318"/>
    <property type="project" value="GO_Central"/>
</dbReference>
<dbReference type="GO" id="GO:0007165">
    <property type="term" value="P:signal transduction"/>
    <property type="evidence" value="ECO:0000318"/>
    <property type="project" value="GO_Central"/>
</dbReference>
<dbReference type="GO" id="GO:1902766">
    <property type="term" value="P:skeletal muscle satellite cell migration"/>
    <property type="evidence" value="ECO:0000250"/>
    <property type="project" value="AgBase"/>
</dbReference>
<dbReference type="GO" id="GO:0007264">
    <property type="term" value="P:small GTPase-mediated signal transduction"/>
    <property type="evidence" value="ECO:0007669"/>
    <property type="project" value="InterPro"/>
</dbReference>
<dbReference type="GO" id="GO:0044319">
    <property type="term" value="P:wound healing, spreading of cells"/>
    <property type="evidence" value="ECO:0000250"/>
    <property type="project" value="AgBase"/>
</dbReference>
<dbReference type="CDD" id="cd01870">
    <property type="entry name" value="RhoA_like"/>
    <property type="match status" value="1"/>
</dbReference>
<dbReference type="FunFam" id="3.40.50.300:FF:000095">
    <property type="entry name" value="Rho-related GTP-binding protein RhoC"/>
    <property type="match status" value="1"/>
</dbReference>
<dbReference type="Gene3D" id="3.40.50.300">
    <property type="entry name" value="P-loop containing nucleotide triphosphate hydrolases"/>
    <property type="match status" value="1"/>
</dbReference>
<dbReference type="InterPro" id="IPR027417">
    <property type="entry name" value="P-loop_NTPase"/>
</dbReference>
<dbReference type="InterPro" id="IPR005225">
    <property type="entry name" value="Small_GTP-bd"/>
</dbReference>
<dbReference type="InterPro" id="IPR001806">
    <property type="entry name" value="Small_GTPase"/>
</dbReference>
<dbReference type="InterPro" id="IPR003578">
    <property type="entry name" value="Small_GTPase_Rho"/>
</dbReference>
<dbReference type="NCBIfam" id="TIGR00231">
    <property type="entry name" value="small_GTP"/>
    <property type="match status" value="1"/>
</dbReference>
<dbReference type="PANTHER" id="PTHR24072">
    <property type="entry name" value="RHO FAMILY GTPASE"/>
    <property type="match status" value="1"/>
</dbReference>
<dbReference type="Pfam" id="PF00071">
    <property type="entry name" value="Ras"/>
    <property type="match status" value="1"/>
</dbReference>
<dbReference type="PRINTS" id="PR00449">
    <property type="entry name" value="RASTRNSFRMNG"/>
</dbReference>
<dbReference type="SMART" id="SM00175">
    <property type="entry name" value="RAB"/>
    <property type="match status" value="1"/>
</dbReference>
<dbReference type="SMART" id="SM00176">
    <property type="entry name" value="RAN"/>
    <property type="match status" value="1"/>
</dbReference>
<dbReference type="SMART" id="SM00173">
    <property type="entry name" value="RAS"/>
    <property type="match status" value="1"/>
</dbReference>
<dbReference type="SMART" id="SM00174">
    <property type="entry name" value="RHO"/>
    <property type="match status" value="1"/>
</dbReference>
<dbReference type="SUPFAM" id="SSF52540">
    <property type="entry name" value="P-loop containing nucleoside triphosphate hydrolases"/>
    <property type="match status" value="1"/>
</dbReference>
<dbReference type="PROSITE" id="PS51420">
    <property type="entry name" value="RHO"/>
    <property type="match status" value="1"/>
</dbReference>
<evidence type="ECO:0000250" key="1">
    <source>
        <dbReference type="UniProtKB" id="P61585"/>
    </source>
</evidence>
<evidence type="ECO:0000250" key="2">
    <source>
        <dbReference type="UniProtKB" id="P61586"/>
    </source>
</evidence>
<evidence type="ECO:0000250" key="3">
    <source>
        <dbReference type="UniProtKB" id="P62820"/>
    </source>
</evidence>
<evidence type="ECO:0000303" key="4">
    <source>
    </source>
</evidence>
<evidence type="ECO:0000305" key="5"/>
<evidence type="ECO:0000305" key="6">
    <source>
    </source>
</evidence>
<evidence type="ECO:0000312" key="7">
    <source>
        <dbReference type="EMBL" id="AAH56556.1"/>
    </source>
</evidence>
<evidence type="ECO:0000312" key="8">
    <source>
        <dbReference type="ZFIN" id="ZDB-GENE-040426-2150"/>
    </source>
</evidence>
<sequence>MAAIRKKLVIVGDGACGKTCLLIVFSKDQFPEVYVPTVFENYVADIEVDSKQVELALWDTAGQEDYDRLRPLSYPDTDVILMCFSIDSPDSLENIPEKWTPEVKHFCPNVPIILVGNKKDLRNDEHTRRELQKMKQEPVKPEEGRDMANRINAFGYLECSAKTKEGVREVFEMATRAALQAKKRGKKNACALL</sequence>
<name>RHOAA_DANRE</name>
<proteinExistence type="evidence at protein level"/>
<reference key="1">
    <citation type="journal article" date="2005" name="Genomics">
        <title>Genomic annotation and expression analysis of the zebrafish Rho small GTPase family during development and bacterial infection.</title>
        <authorList>
            <person name="Salas-Vidal E."/>
            <person name="Meijer A.H."/>
            <person name="Cheng X."/>
            <person name="Spaink H.P."/>
        </authorList>
    </citation>
    <scope>NUCLEOTIDE SEQUENCE [MRNA]</scope>
</reference>
<reference key="2">
    <citation type="journal article" date="2013" name="Nature">
        <title>The zebrafish reference genome sequence and its relationship to the human genome.</title>
        <authorList>
            <person name="Howe K."/>
            <person name="Clark M.D."/>
            <person name="Torroja C.F."/>
            <person name="Torrance J."/>
            <person name="Berthelot C."/>
            <person name="Muffato M."/>
            <person name="Collins J.E."/>
            <person name="Humphray S."/>
            <person name="McLaren K."/>
            <person name="Matthews L."/>
            <person name="McLaren S."/>
            <person name="Sealy I."/>
            <person name="Caccamo M."/>
            <person name="Churcher C."/>
            <person name="Scott C."/>
            <person name="Barrett J.C."/>
            <person name="Koch R."/>
            <person name="Rauch G.J."/>
            <person name="White S."/>
            <person name="Chow W."/>
            <person name="Kilian B."/>
            <person name="Quintais L.T."/>
            <person name="Guerra-Assuncao J.A."/>
            <person name="Zhou Y."/>
            <person name="Gu Y."/>
            <person name="Yen J."/>
            <person name="Vogel J.H."/>
            <person name="Eyre T."/>
            <person name="Redmond S."/>
            <person name="Banerjee R."/>
            <person name="Chi J."/>
            <person name="Fu B."/>
            <person name="Langley E."/>
            <person name="Maguire S.F."/>
            <person name="Laird G.K."/>
            <person name="Lloyd D."/>
            <person name="Kenyon E."/>
            <person name="Donaldson S."/>
            <person name="Sehra H."/>
            <person name="Almeida-King J."/>
            <person name="Loveland J."/>
            <person name="Trevanion S."/>
            <person name="Jones M."/>
            <person name="Quail M."/>
            <person name="Willey D."/>
            <person name="Hunt A."/>
            <person name="Burton J."/>
            <person name="Sims S."/>
            <person name="McLay K."/>
            <person name="Plumb B."/>
            <person name="Davis J."/>
            <person name="Clee C."/>
            <person name="Oliver K."/>
            <person name="Clark R."/>
            <person name="Riddle C."/>
            <person name="Elliot D."/>
            <person name="Threadgold G."/>
            <person name="Harden G."/>
            <person name="Ware D."/>
            <person name="Begum S."/>
            <person name="Mortimore B."/>
            <person name="Kerry G."/>
            <person name="Heath P."/>
            <person name="Phillimore B."/>
            <person name="Tracey A."/>
            <person name="Corby N."/>
            <person name="Dunn M."/>
            <person name="Johnson C."/>
            <person name="Wood J."/>
            <person name="Clark S."/>
            <person name="Pelan S."/>
            <person name="Griffiths G."/>
            <person name="Smith M."/>
            <person name="Glithero R."/>
            <person name="Howden P."/>
            <person name="Barker N."/>
            <person name="Lloyd C."/>
            <person name="Stevens C."/>
            <person name="Harley J."/>
            <person name="Holt K."/>
            <person name="Panagiotidis G."/>
            <person name="Lovell J."/>
            <person name="Beasley H."/>
            <person name="Henderson C."/>
            <person name="Gordon D."/>
            <person name="Auger K."/>
            <person name="Wright D."/>
            <person name="Collins J."/>
            <person name="Raisen C."/>
            <person name="Dyer L."/>
            <person name="Leung K."/>
            <person name="Robertson L."/>
            <person name="Ambridge K."/>
            <person name="Leongamornlert D."/>
            <person name="McGuire S."/>
            <person name="Gilderthorp R."/>
            <person name="Griffiths C."/>
            <person name="Manthravadi D."/>
            <person name="Nichol S."/>
            <person name="Barker G."/>
            <person name="Whitehead S."/>
            <person name="Kay M."/>
            <person name="Brown J."/>
            <person name="Murnane C."/>
            <person name="Gray E."/>
            <person name="Humphries M."/>
            <person name="Sycamore N."/>
            <person name="Barker D."/>
            <person name="Saunders D."/>
            <person name="Wallis J."/>
            <person name="Babbage A."/>
            <person name="Hammond S."/>
            <person name="Mashreghi-Mohammadi M."/>
            <person name="Barr L."/>
            <person name="Martin S."/>
            <person name="Wray P."/>
            <person name="Ellington A."/>
            <person name="Matthews N."/>
            <person name="Ellwood M."/>
            <person name="Woodmansey R."/>
            <person name="Clark G."/>
            <person name="Cooper J."/>
            <person name="Tromans A."/>
            <person name="Grafham D."/>
            <person name="Skuce C."/>
            <person name="Pandian R."/>
            <person name="Andrews R."/>
            <person name="Harrison E."/>
            <person name="Kimberley A."/>
            <person name="Garnett J."/>
            <person name="Fosker N."/>
            <person name="Hall R."/>
            <person name="Garner P."/>
            <person name="Kelly D."/>
            <person name="Bird C."/>
            <person name="Palmer S."/>
            <person name="Gehring I."/>
            <person name="Berger A."/>
            <person name="Dooley C.M."/>
            <person name="Ersan-Urun Z."/>
            <person name="Eser C."/>
            <person name="Geiger H."/>
            <person name="Geisler M."/>
            <person name="Karotki L."/>
            <person name="Kirn A."/>
            <person name="Konantz J."/>
            <person name="Konantz M."/>
            <person name="Oberlander M."/>
            <person name="Rudolph-Geiger S."/>
            <person name="Teucke M."/>
            <person name="Lanz C."/>
            <person name="Raddatz G."/>
            <person name="Osoegawa K."/>
            <person name="Zhu B."/>
            <person name="Rapp A."/>
            <person name="Widaa S."/>
            <person name="Langford C."/>
            <person name="Yang F."/>
            <person name="Schuster S.C."/>
            <person name="Carter N.P."/>
            <person name="Harrow J."/>
            <person name="Ning Z."/>
            <person name="Herrero J."/>
            <person name="Searle S.M."/>
            <person name="Enright A."/>
            <person name="Geisler R."/>
            <person name="Plasterk R.H."/>
            <person name="Lee C."/>
            <person name="Westerfield M."/>
            <person name="de Jong P.J."/>
            <person name="Zon L.I."/>
            <person name="Postlethwait J.H."/>
            <person name="Nusslein-Volhard C."/>
            <person name="Hubbard T.J."/>
            <person name="Roest Crollius H."/>
            <person name="Rogers J."/>
            <person name="Stemple D.L."/>
        </authorList>
    </citation>
    <scope>NUCLEOTIDE SEQUENCE [LARGE SCALE GENOMIC DNA]</scope>
    <source>
        <strain>Tuebingen</strain>
    </source>
</reference>
<reference key="3">
    <citation type="submission" date="2003-08" db="EMBL/GenBank/DDBJ databases">
        <authorList>
            <consortium name="NIH - Zebrafish Gene Collection (ZGC) project"/>
        </authorList>
    </citation>
    <scope>NUCLEOTIDE SEQUENCE [LARGE SCALE MRNA]</scope>
    <source>
        <tissue evidence="7">Kidney</tissue>
    </source>
</reference>
<reference key="4">
    <citation type="journal article" date="2015" name="Nat. Commun.">
        <title>Tyrosine glycosylation of Rho by Yersinia toxin impairs blastomere cell behaviour in zebrafish embryos.</title>
        <authorList>
            <person name="Jank T."/>
            <person name="Eckerle S."/>
            <person name="Steinemann M."/>
            <person name="Trillhaase C."/>
            <person name="Schimpl M."/>
            <person name="Wiese S."/>
            <person name="van Aalten D.M."/>
            <person name="Driever W."/>
            <person name="Aktories K."/>
        </authorList>
    </citation>
    <scope>GLYCOSYLATION AT TYR-34 (MICROBIAL INFECTION)</scope>
    <scope>SUBCELLULAR LOCATION</scope>
</reference>
<organism>
    <name type="scientific">Danio rerio</name>
    <name type="common">Zebrafish</name>
    <name type="synonym">Brachydanio rerio</name>
    <dbReference type="NCBI Taxonomy" id="7955"/>
    <lineage>
        <taxon>Eukaryota</taxon>
        <taxon>Metazoa</taxon>
        <taxon>Chordata</taxon>
        <taxon>Craniata</taxon>
        <taxon>Vertebrata</taxon>
        <taxon>Euteleostomi</taxon>
        <taxon>Actinopterygii</taxon>
        <taxon>Neopterygii</taxon>
        <taxon>Teleostei</taxon>
        <taxon>Ostariophysi</taxon>
        <taxon>Cypriniformes</taxon>
        <taxon>Danionidae</taxon>
        <taxon>Danioninae</taxon>
        <taxon>Danio</taxon>
    </lineage>
</organism>